<organism>
    <name type="scientific">Mus musculus</name>
    <name type="common">Mouse</name>
    <dbReference type="NCBI Taxonomy" id="10090"/>
    <lineage>
        <taxon>Eukaryota</taxon>
        <taxon>Metazoa</taxon>
        <taxon>Chordata</taxon>
        <taxon>Craniata</taxon>
        <taxon>Vertebrata</taxon>
        <taxon>Euteleostomi</taxon>
        <taxon>Mammalia</taxon>
        <taxon>Eutheria</taxon>
        <taxon>Euarchontoglires</taxon>
        <taxon>Glires</taxon>
        <taxon>Rodentia</taxon>
        <taxon>Myomorpha</taxon>
        <taxon>Muroidea</taxon>
        <taxon>Muridae</taxon>
        <taxon>Murinae</taxon>
        <taxon>Mus</taxon>
        <taxon>Mus</taxon>
    </lineage>
</organism>
<sequence>MEPSTSTRKHFTINDFEIGRPLGRGKFGRVYLARLKENHFIVALKVLFKSEIEKEGLEHQLRREVEIQAHLQHRNILRLYNYFYDDTRIYLILEYAPGGELYKELQRHQKLDQQRTATIIQELSDALTYCHEKKVIHRDIKPENLLLGLNGEVKISDFGWSVHTPSLRRKTMCGTLDYLPPEMIAQKPYNEMVDLWCIGVLCYELLVGKPPFESSTSSETYRRIRQVDFKFPSSVPAGAQDLISKLLRYHPSERLSLAQVLKHPWVREHSRRVLPC</sequence>
<keyword id="KW-0067">ATP-binding</keyword>
<keyword id="KW-0131">Cell cycle</keyword>
<keyword id="KW-0132">Cell division</keyword>
<keyword id="KW-0137">Centromere</keyword>
<keyword id="KW-0158">Chromosome</keyword>
<keyword id="KW-0963">Cytoplasm</keyword>
<keyword id="KW-0206">Cytoskeleton</keyword>
<keyword id="KW-0418">Kinase</keyword>
<keyword id="KW-0469">Meiosis</keyword>
<keyword id="KW-0498">Mitosis</keyword>
<keyword id="KW-0547">Nucleotide-binding</keyword>
<keyword id="KW-0539">Nucleus</keyword>
<keyword id="KW-0597">Phosphoprotein</keyword>
<keyword id="KW-1185">Reference proteome</keyword>
<keyword id="KW-0723">Serine/threonine-protein kinase</keyword>
<keyword id="KW-0808">Transferase</keyword>
<proteinExistence type="evidence at protein level"/>
<evidence type="ECO:0000250" key="1"/>
<evidence type="ECO:0000250" key="2">
    <source>
        <dbReference type="UniProtKB" id="Q9UQB9"/>
    </source>
</evidence>
<evidence type="ECO:0000255" key="3">
    <source>
        <dbReference type="PROSITE-ProRule" id="PRU00159"/>
    </source>
</evidence>
<evidence type="ECO:0000255" key="4">
    <source>
        <dbReference type="PROSITE-ProRule" id="PRU10027"/>
    </source>
</evidence>
<evidence type="ECO:0000269" key="5">
    <source>
    </source>
</evidence>
<evidence type="ECO:0000269" key="6">
    <source>
    </source>
</evidence>
<evidence type="ECO:0000305" key="7"/>
<evidence type="ECO:0000312" key="8">
    <source>
        <dbReference type="EMBL" id="AAH64780.1"/>
    </source>
</evidence>
<evidence type="ECO:0000312" key="9">
    <source>
        <dbReference type="Proteomes" id="UP000000589"/>
    </source>
</evidence>
<name>AURKC_MOUSE</name>
<dbReference type="EC" id="2.7.11.1"/>
<dbReference type="EMBL" id="AF054620">
    <property type="protein sequence ID" value="AAC25954.1"/>
    <property type="molecule type" value="mRNA"/>
</dbReference>
<dbReference type="EMBL" id="AF195272">
    <property type="protein sequence ID" value="AAF25838.1"/>
    <property type="molecule type" value="Genomic_DNA"/>
</dbReference>
<dbReference type="EMBL" id="AC152418">
    <property type="status" value="NOT_ANNOTATED_CDS"/>
    <property type="molecule type" value="Genomic_DNA"/>
</dbReference>
<dbReference type="EMBL" id="BC064780">
    <property type="protein sequence ID" value="AAH64780.1"/>
    <property type="molecule type" value="mRNA"/>
</dbReference>
<dbReference type="CCDS" id="CCDS85211.1"/>
<dbReference type="RefSeq" id="NP_001074434.2">
    <property type="nucleotide sequence ID" value="NM_001080965.2"/>
</dbReference>
<dbReference type="RefSeq" id="NP_001074435.1">
    <property type="nucleotide sequence ID" value="NM_001080966.2"/>
</dbReference>
<dbReference type="RefSeq" id="NP_065597.2">
    <property type="nucleotide sequence ID" value="NM_020572.3"/>
</dbReference>
<dbReference type="RefSeq" id="XP_006539760.1">
    <property type="nucleotide sequence ID" value="XM_006539697.3"/>
</dbReference>
<dbReference type="RefSeq" id="XP_006539764.1">
    <property type="nucleotide sequence ID" value="XM_006539701.3"/>
</dbReference>
<dbReference type="RefSeq" id="XP_011248768.1">
    <property type="nucleotide sequence ID" value="XM_011250466.2"/>
</dbReference>
<dbReference type="RefSeq" id="XP_017177568.1">
    <property type="nucleotide sequence ID" value="XM_017322079.1"/>
</dbReference>
<dbReference type="RefSeq" id="XP_017177569.1">
    <property type="nucleotide sequence ID" value="XM_017322080.1"/>
</dbReference>
<dbReference type="RefSeq" id="XP_017177570.1">
    <property type="nucleotide sequence ID" value="XM_017322081.1"/>
</dbReference>
<dbReference type="SMR" id="O88445"/>
<dbReference type="FunCoup" id="O88445">
    <property type="interactions" value="199"/>
</dbReference>
<dbReference type="STRING" id="10090.ENSMUSP00000083426"/>
<dbReference type="iPTMnet" id="O88445"/>
<dbReference type="PhosphoSitePlus" id="O88445"/>
<dbReference type="PaxDb" id="10090-ENSMUSP00000083426"/>
<dbReference type="ProteomicsDB" id="273431"/>
<dbReference type="ProteomicsDB" id="334427"/>
<dbReference type="Antibodypedia" id="33237">
    <property type="antibodies" value="506 antibodies from 29 providers"/>
</dbReference>
<dbReference type="DNASU" id="20871"/>
<dbReference type="Ensembl" id="ENSMUST00000086248.8">
    <property type="protein sequence ID" value="ENSMUSP00000083426.7"/>
    <property type="gene ID" value="ENSMUSG00000070837.7"/>
</dbReference>
<dbReference type="Ensembl" id="ENSMUST00000207711.2">
    <property type="protein sequence ID" value="ENSMUSP00000146450.2"/>
    <property type="gene ID" value="ENSMUSG00000070837.7"/>
</dbReference>
<dbReference type="Ensembl" id="ENSMUST00000208049.2">
    <property type="protein sequence ID" value="ENSMUSP00000147207.2"/>
    <property type="gene ID" value="ENSMUSG00000070837.7"/>
</dbReference>
<dbReference type="GeneID" id="20871"/>
<dbReference type="KEGG" id="mmu:20871"/>
<dbReference type="UCSC" id="uc009fcf.1">
    <property type="organism name" value="mouse"/>
</dbReference>
<dbReference type="AGR" id="MGI:1321119"/>
<dbReference type="CTD" id="6795"/>
<dbReference type="MGI" id="MGI:1321119">
    <property type="gene designation" value="Aurkc"/>
</dbReference>
<dbReference type="VEuPathDB" id="HostDB:ENSMUSG00000070837"/>
<dbReference type="eggNOG" id="KOG0580">
    <property type="taxonomic scope" value="Eukaryota"/>
</dbReference>
<dbReference type="GeneTree" id="ENSGT00940000161619"/>
<dbReference type="InParanoid" id="O88445"/>
<dbReference type="OMA" id="AVDQKRW"/>
<dbReference type="OrthoDB" id="377346at2759"/>
<dbReference type="BioGRID-ORCS" id="20871">
    <property type="hits" value="0 hits in 82 CRISPR screens"/>
</dbReference>
<dbReference type="ChiTaRS" id="Aurkc">
    <property type="organism name" value="mouse"/>
</dbReference>
<dbReference type="PRO" id="PR:O88445"/>
<dbReference type="Proteomes" id="UP000000589">
    <property type="component" value="Chromosome 7"/>
</dbReference>
<dbReference type="RNAct" id="O88445">
    <property type="molecule type" value="protein"/>
</dbReference>
<dbReference type="Bgee" id="ENSMUSG00000070837">
    <property type="expression patterns" value="Expressed in secondary oocyte and 25 other cell types or tissues"/>
</dbReference>
<dbReference type="ExpressionAtlas" id="O88445">
    <property type="expression patterns" value="baseline and differential"/>
</dbReference>
<dbReference type="GO" id="GO:0005694">
    <property type="term" value="C:chromosome"/>
    <property type="evidence" value="ECO:0000314"/>
    <property type="project" value="MGI"/>
</dbReference>
<dbReference type="GO" id="GO:0000775">
    <property type="term" value="C:chromosome, centromeric region"/>
    <property type="evidence" value="ECO:0000314"/>
    <property type="project" value="MGI"/>
</dbReference>
<dbReference type="GO" id="GO:0000793">
    <property type="term" value="C:condensed chromosome"/>
    <property type="evidence" value="ECO:0000250"/>
    <property type="project" value="UniProtKB"/>
</dbReference>
<dbReference type="GO" id="GO:0005737">
    <property type="term" value="C:cytoplasm"/>
    <property type="evidence" value="ECO:0007669"/>
    <property type="project" value="UniProtKB-KW"/>
</dbReference>
<dbReference type="GO" id="GO:1990385">
    <property type="term" value="C:meiotic spindle midzone"/>
    <property type="evidence" value="ECO:0000314"/>
    <property type="project" value="MGI"/>
</dbReference>
<dbReference type="GO" id="GO:0030496">
    <property type="term" value="C:midbody"/>
    <property type="evidence" value="ECO:0000250"/>
    <property type="project" value="UniProtKB"/>
</dbReference>
<dbReference type="GO" id="GO:0005634">
    <property type="term" value="C:nucleus"/>
    <property type="evidence" value="ECO:0007669"/>
    <property type="project" value="UniProtKB-SubCell"/>
</dbReference>
<dbReference type="GO" id="GO:0051233">
    <property type="term" value="C:spindle midzone"/>
    <property type="evidence" value="ECO:0000250"/>
    <property type="project" value="UniProtKB"/>
</dbReference>
<dbReference type="GO" id="GO:0005524">
    <property type="term" value="F:ATP binding"/>
    <property type="evidence" value="ECO:0007669"/>
    <property type="project" value="UniProtKB-KW"/>
</dbReference>
<dbReference type="GO" id="GO:0004672">
    <property type="term" value="F:protein kinase activity"/>
    <property type="evidence" value="ECO:0000314"/>
    <property type="project" value="MGI"/>
</dbReference>
<dbReference type="GO" id="GO:0106310">
    <property type="term" value="F:protein serine kinase activity"/>
    <property type="evidence" value="ECO:0007669"/>
    <property type="project" value="RHEA"/>
</dbReference>
<dbReference type="GO" id="GO:0004674">
    <property type="term" value="F:protein serine/threonine kinase activity"/>
    <property type="evidence" value="ECO:0007669"/>
    <property type="project" value="UniProtKB-KW"/>
</dbReference>
<dbReference type="GO" id="GO:0051301">
    <property type="term" value="P:cell division"/>
    <property type="evidence" value="ECO:0007669"/>
    <property type="project" value="UniProtKB-KW"/>
</dbReference>
<dbReference type="GO" id="GO:0051321">
    <property type="term" value="P:meiotic cell cycle"/>
    <property type="evidence" value="ECO:0007669"/>
    <property type="project" value="UniProtKB-KW"/>
</dbReference>
<dbReference type="GO" id="GO:0006468">
    <property type="term" value="P:protein phosphorylation"/>
    <property type="evidence" value="ECO:0000250"/>
    <property type="project" value="UniProtKB"/>
</dbReference>
<dbReference type="FunFam" id="3.30.200.20:FF:000042">
    <property type="entry name" value="Aurora kinase A"/>
    <property type="match status" value="1"/>
</dbReference>
<dbReference type="FunFam" id="1.10.510.10:FF:000235">
    <property type="entry name" value="Serine/threonine-protein kinase ark1"/>
    <property type="match status" value="1"/>
</dbReference>
<dbReference type="Gene3D" id="3.30.200.20">
    <property type="entry name" value="Phosphorylase Kinase, domain 1"/>
    <property type="match status" value="1"/>
</dbReference>
<dbReference type="Gene3D" id="1.10.510.10">
    <property type="entry name" value="Transferase(Phosphotransferase) domain 1"/>
    <property type="match status" value="1"/>
</dbReference>
<dbReference type="InterPro" id="IPR030616">
    <property type="entry name" value="Aur-like"/>
</dbReference>
<dbReference type="InterPro" id="IPR011009">
    <property type="entry name" value="Kinase-like_dom_sf"/>
</dbReference>
<dbReference type="InterPro" id="IPR000719">
    <property type="entry name" value="Prot_kinase_dom"/>
</dbReference>
<dbReference type="InterPro" id="IPR017441">
    <property type="entry name" value="Protein_kinase_ATP_BS"/>
</dbReference>
<dbReference type="InterPro" id="IPR008271">
    <property type="entry name" value="Ser/Thr_kinase_AS"/>
</dbReference>
<dbReference type="PANTHER" id="PTHR24350">
    <property type="entry name" value="SERINE/THREONINE-PROTEIN KINASE IAL-RELATED"/>
    <property type="match status" value="1"/>
</dbReference>
<dbReference type="Pfam" id="PF00069">
    <property type="entry name" value="Pkinase"/>
    <property type="match status" value="1"/>
</dbReference>
<dbReference type="PIRSF" id="PIRSF000654">
    <property type="entry name" value="Integrin-linked_kinase"/>
    <property type="match status" value="1"/>
</dbReference>
<dbReference type="SMART" id="SM00220">
    <property type="entry name" value="S_TKc"/>
    <property type="match status" value="1"/>
</dbReference>
<dbReference type="SUPFAM" id="SSF56112">
    <property type="entry name" value="Protein kinase-like (PK-like)"/>
    <property type="match status" value="1"/>
</dbReference>
<dbReference type="PROSITE" id="PS00107">
    <property type="entry name" value="PROTEIN_KINASE_ATP"/>
    <property type="match status" value="1"/>
</dbReference>
<dbReference type="PROSITE" id="PS50011">
    <property type="entry name" value="PROTEIN_KINASE_DOM"/>
    <property type="match status" value="1"/>
</dbReference>
<dbReference type="PROSITE" id="PS00108">
    <property type="entry name" value="PROTEIN_KINASE_ST"/>
    <property type="match status" value="1"/>
</dbReference>
<comment type="function">
    <text evidence="5 6">Serine/threonine-protein kinase component of the chromosomal passenger complex (CPC), a complex that acts as a key regulator of mitosis. The CPC complex has essential functions at the centromere in ensuring correct chromosome alignment and segregation and is required for chromatin-induced microtubule stabilization and spindle assembly. Also plays a role in meiosis and more particularly in spermatogenesis. Has redundant cellular functions with AURKB and can rescue an AURKB knockdown. Like AURKB, AURKC phosphorylates histone H3 at 'Ser-10' and 'Ser-28'. AURKC phosphorylates the CPC complex subunits BIRC5/survivin and INCENP leading to increased AURKC activity. Phosphorylates TACC1, another protein involved in cell division, at 'Ser-228'.</text>
</comment>
<comment type="catalytic activity">
    <reaction>
        <text>L-seryl-[protein] + ATP = O-phospho-L-seryl-[protein] + ADP + H(+)</text>
        <dbReference type="Rhea" id="RHEA:17989"/>
        <dbReference type="Rhea" id="RHEA-COMP:9863"/>
        <dbReference type="Rhea" id="RHEA-COMP:11604"/>
        <dbReference type="ChEBI" id="CHEBI:15378"/>
        <dbReference type="ChEBI" id="CHEBI:29999"/>
        <dbReference type="ChEBI" id="CHEBI:30616"/>
        <dbReference type="ChEBI" id="CHEBI:83421"/>
        <dbReference type="ChEBI" id="CHEBI:456216"/>
        <dbReference type="EC" id="2.7.11.1"/>
    </reaction>
</comment>
<comment type="catalytic activity">
    <reaction>
        <text>L-threonyl-[protein] + ATP = O-phospho-L-threonyl-[protein] + ADP + H(+)</text>
        <dbReference type="Rhea" id="RHEA:46608"/>
        <dbReference type="Rhea" id="RHEA-COMP:11060"/>
        <dbReference type="Rhea" id="RHEA-COMP:11605"/>
        <dbReference type="ChEBI" id="CHEBI:15378"/>
        <dbReference type="ChEBI" id="CHEBI:30013"/>
        <dbReference type="ChEBI" id="CHEBI:30616"/>
        <dbReference type="ChEBI" id="CHEBI:61977"/>
        <dbReference type="ChEBI" id="CHEBI:456216"/>
        <dbReference type="EC" id="2.7.11.1"/>
    </reaction>
</comment>
<comment type="activity regulation">
    <text evidence="2">Okadaic acid, an inhibitor of protein phosphatase 1 (PP1), protein phosphatase 2A (PP2A) and protein phosphatase 5 (PP5), increases AURKC activity. AURKC is also stabilized through its interaction with INCENP, which also acts as an activator (By similarity).</text>
</comment>
<comment type="subunit">
    <text evidence="2">Component of the chromosomal passenger complex (CPC) composed of at least BIRC5/survivin, CDCA8/borealin, INCENP, AURKB or AURKC; predominantly independent AURKB- and AURKC-containing complexes exist; in the complex interacts directly with BIRC5/survivin and INCENP. Interacts with TACC1.</text>
</comment>
<comment type="subcellular location">
    <subcellularLocation>
        <location evidence="1">Nucleus</location>
    </subcellularLocation>
    <subcellularLocation>
        <location evidence="1">Chromosome</location>
    </subcellularLocation>
    <subcellularLocation>
        <location evidence="2">Chromosome</location>
        <location evidence="2">Centromere</location>
    </subcellularLocation>
    <subcellularLocation>
        <location evidence="2">Cytoplasm</location>
        <location evidence="2">Cytoskeleton</location>
        <location evidence="2">Spindle</location>
    </subcellularLocation>
    <text evidence="2">Distributes in the condensed chromosomes during prophase to metaphase. After entering anaphase, there is a dissociation from separated chromosomes and a redistribution to midzone microtubules, and finally remains in the midbody during cytokinesis (By similarity).</text>
</comment>
<comment type="tissue specificity">
    <text>Expressed only in testis.</text>
</comment>
<comment type="developmental stage">
    <text>Expressed on day 14 dpc in prepubertal testis, expression reached its plateau on day 21 dpc and remained at a high level in adult.</text>
</comment>
<comment type="similarity">
    <text evidence="3">Belongs to the protein kinase superfamily. Ser/Thr protein kinase family. Aurora subfamily.</text>
</comment>
<gene>
    <name type="primary">Aurkc</name>
    <name type="synonym">Aie1</name>
    <name type="synonym">Aik3</name>
    <name type="synonym">Airk3</name>
    <name type="synonym">Ark3</name>
    <name type="synonym">Stk13</name>
</gene>
<protein>
    <recommendedName>
        <fullName>Aurora kinase C</fullName>
        <ecNumber>2.7.11.1</ecNumber>
    </recommendedName>
    <alternativeName>
        <fullName>Aurora 3</fullName>
    </alternativeName>
    <alternativeName>
        <fullName>Aurora/IPL1-related kinase 3</fullName>
        <shortName>ARK-3</shortName>
        <shortName>Aurora-related kinase 3</shortName>
    </alternativeName>
    <alternativeName>
        <fullName>Aurora/IPL1/Eg2 protein 1</fullName>
    </alternativeName>
    <alternativeName>
        <fullName>Serine/threonine-protein kinase 13</fullName>
    </alternativeName>
    <alternativeName>
        <fullName>Serine/threonine-protein kinase aurora-C</fullName>
    </alternativeName>
</protein>
<feature type="chain" id="PRO_0000085661" description="Aurora kinase C">
    <location>
        <begin position="1"/>
        <end position="276"/>
    </location>
</feature>
<feature type="domain" description="Protein kinase" evidence="3">
    <location>
        <begin position="16"/>
        <end position="266"/>
    </location>
</feature>
<feature type="active site" description="Proton acceptor" evidence="3 4">
    <location>
        <position position="139"/>
    </location>
</feature>
<feature type="binding site" evidence="3">
    <location>
        <begin position="22"/>
        <end position="30"/>
    </location>
    <ligand>
        <name>ATP</name>
        <dbReference type="ChEBI" id="CHEBI:30616"/>
    </ligand>
</feature>
<feature type="binding site" evidence="3">
    <location>
        <position position="45"/>
    </location>
    <ligand>
        <name>ATP</name>
        <dbReference type="ChEBI" id="CHEBI:30616"/>
    </ligand>
</feature>
<feature type="modified residue" description="Phosphothreonine; by PKA" evidence="5">
    <location>
        <position position="171"/>
    </location>
</feature>
<feature type="mutagenesis site" description="Impairs kinase activity, when associated with A-175." evidence="5">
    <original>T</original>
    <variation>A</variation>
    <location>
        <position position="171"/>
    </location>
</feature>
<feature type="mutagenesis site" description="Impairs kinase activity, when associated with A-171." evidence="5">
    <original>T</original>
    <variation>A</variation>
    <location>
        <position position="175"/>
    </location>
</feature>
<feature type="sequence conflict" description="In Ref. 2; AAF25838." evidence="7" ref="2">
    <original>R</original>
    <variation>P</variation>
    <location>
        <position position="74"/>
    </location>
</feature>
<feature type="sequence conflict" description="In Ref. 1; AAC25954 and 2; AAF25838." evidence="7" ref="1 2">
    <original>C</original>
    <variation>PCVHGAS</variation>
    <location>
        <position position="276"/>
    </location>
</feature>
<reference key="1">
    <citation type="journal article" date="1998" name="DNA Cell Biol.">
        <title>Protein kinase profile of sperm and eggs: cloning and characterization of two novel testis-specific protein kinases (AIE1, AIE2) related to yeast and fly chromosome segregation regulators.</title>
        <authorList>
            <person name="Tseng T.-C."/>
            <person name="Chen S.-H."/>
            <person name="Hsu Y.-P.P."/>
            <person name="Tang T.K."/>
        </authorList>
    </citation>
    <scope>NUCLEOTIDE SEQUENCE [MRNA]</scope>
    <source>
        <strain>BALB/cJ</strain>
    </source>
</reference>
<reference key="2">
    <citation type="journal article" date="2000" name="DNA Cell Biol.">
        <title>Genomic organization, expression, and chromosome localization of a third aurora-related kinase gene, Aie1.</title>
        <authorList>
            <person name="Hu H.M."/>
            <person name="Chuang C.K."/>
            <person name="Lee M.J."/>
            <person name="Tseng T.C."/>
            <person name="Tang T.K."/>
        </authorList>
    </citation>
    <scope>NUCLEOTIDE SEQUENCE [GENOMIC DNA]</scope>
    <source>
        <strain>129</strain>
    </source>
</reference>
<reference evidence="9" key="3">
    <citation type="journal article" date="2009" name="PLoS Biol.">
        <title>Lineage-specific biology revealed by a finished genome assembly of the mouse.</title>
        <authorList>
            <person name="Church D.M."/>
            <person name="Goodstadt L."/>
            <person name="Hillier L.W."/>
            <person name="Zody M.C."/>
            <person name="Goldstein S."/>
            <person name="She X."/>
            <person name="Bult C.J."/>
            <person name="Agarwala R."/>
            <person name="Cherry J.L."/>
            <person name="DiCuccio M."/>
            <person name="Hlavina W."/>
            <person name="Kapustin Y."/>
            <person name="Meric P."/>
            <person name="Maglott D."/>
            <person name="Birtle Z."/>
            <person name="Marques A.C."/>
            <person name="Graves T."/>
            <person name="Zhou S."/>
            <person name="Teague B."/>
            <person name="Potamousis K."/>
            <person name="Churas C."/>
            <person name="Place M."/>
            <person name="Herschleb J."/>
            <person name="Runnheim R."/>
            <person name="Forrest D."/>
            <person name="Amos-Landgraf J."/>
            <person name="Schwartz D.C."/>
            <person name="Cheng Z."/>
            <person name="Lindblad-Toh K."/>
            <person name="Eichler E.E."/>
            <person name="Ponting C.P."/>
        </authorList>
    </citation>
    <scope>NUCLEOTIDE SEQUENCE [LARGE SCALE GENOMIC DNA]</scope>
    <source>
        <strain evidence="9">C57BL/6J</strain>
    </source>
</reference>
<reference key="4">
    <citation type="journal article" date="2004" name="Genome Res.">
        <title>The status, quality, and expansion of the NIH full-length cDNA project: the Mammalian Gene Collection (MGC).</title>
        <authorList>
            <consortium name="The MGC Project Team"/>
        </authorList>
    </citation>
    <scope>NUCLEOTIDE SEQUENCE [LARGE SCALE MRNA]</scope>
    <source>
        <strain evidence="8">C57BL/6J</strain>
    </source>
</reference>
<reference key="5">
    <citation type="journal article" date="2002" name="DNA Cell Biol.">
        <title>Mutational analysis of the phosphorylation sites of the Aie1 (Aurora-C) kinase in vitro.</title>
        <authorList>
            <person name="Chen S.H."/>
            <person name="Tang T.K."/>
        </authorList>
    </citation>
    <scope>FUNCTION</scope>
    <scope>MUTAGENESIS OF THR-171 AND THR-175</scope>
    <scope>PHOSPHORYLATION AT THR-171 BY PKA</scope>
</reference>
<reference key="6">
    <citation type="journal article" date="2011" name="Development">
        <title>Genetic disruption of aurora B uncovers an essential role for aurora C during early mammalian development.</title>
        <authorList>
            <person name="Fernandez-Miranda G."/>
            <person name="Trakala M."/>
            <person name="Martin J."/>
            <person name="Escobar B."/>
            <person name="Gonzalez A."/>
            <person name="Ghyselinck N.B."/>
            <person name="Ortega S."/>
            <person name="Canamero M."/>
            <person name="de Castro I.P."/>
            <person name="Malumbres M."/>
        </authorList>
    </citation>
    <scope>FUNCTION</scope>
</reference>
<accession>O88445</accession>
<accession>Q6P209</accession>
<accession>Q9JLC2</accession>